<proteinExistence type="inferred from homology"/>
<protein>
    <recommendedName>
        <fullName evidence="1">Pantothenate synthetase</fullName>
        <shortName evidence="1">PS</shortName>
        <ecNumber evidence="1">6.3.2.1</ecNumber>
    </recommendedName>
    <alternativeName>
        <fullName evidence="1">Pantoate--beta-alanine ligase</fullName>
    </alternativeName>
    <alternativeName>
        <fullName evidence="1">Pantoate-activating enzyme</fullName>
    </alternativeName>
</protein>
<accession>A5D5T5</accession>
<gene>
    <name evidence="1" type="primary">panC</name>
    <name type="ordered locus">PTH_0221</name>
</gene>
<name>PANC_PELTS</name>
<keyword id="KW-0067">ATP-binding</keyword>
<keyword id="KW-0963">Cytoplasm</keyword>
<keyword id="KW-0436">Ligase</keyword>
<keyword id="KW-0547">Nucleotide-binding</keyword>
<keyword id="KW-0566">Pantothenate biosynthesis</keyword>
<keyword id="KW-1185">Reference proteome</keyword>
<reference key="1">
    <citation type="journal article" date="2008" name="Genome Res.">
        <title>The genome of Pelotomaculum thermopropionicum reveals niche-associated evolution in anaerobic microbiota.</title>
        <authorList>
            <person name="Kosaka T."/>
            <person name="Kato S."/>
            <person name="Shimoyama T."/>
            <person name="Ishii S."/>
            <person name="Abe T."/>
            <person name="Watanabe K."/>
        </authorList>
    </citation>
    <scope>NUCLEOTIDE SEQUENCE [LARGE SCALE GENOMIC DNA]</scope>
    <source>
        <strain>DSM 13744 / JCM 10971 / SI</strain>
    </source>
</reference>
<evidence type="ECO:0000255" key="1">
    <source>
        <dbReference type="HAMAP-Rule" id="MF_00158"/>
    </source>
</evidence>
<dbReference type="EC" id="6.3.2.1" evidence="1"/>
<dbReference type="EMBL" id="AP009389">
    <property type="protein sequence ID" value="BAF58402.1"/>
    <property type="molecule type" value="Genomic_DNA"/>
</dbReference>
<dbReference type="SMR" id="A5D5T5"/>
<dbReference type="STRING" id="370438.PTH_0221"/>
<dbReference type="KEGG" id="pth:PTH_0221"/>
<dbReference type="eggNOG" id="COG0414">
    <property type="taxonomic scope" value="Bacteria"/>
</dbReference>
<dbReference type="HOGENOM" id="CLU_047148_0_0_9"/>
<dbReference type="UniPathway" id="UPA00028">
    <property type="reaction ID" value="UER00005"/>
</dbReference>
<dbReference type="Proteomes" id="UP000006556">
    <property type="component" value="Chromosome"/>
</dbReference>
<dbReference type="GO" id="GO:0005829">
    <property type="term" value="C:cytosol"/>
    <property type="evidence" value="ECO:0007669"/>
    <property type="project" value="TreeGrafter"/>
</dbReference>
<dbReference type="GO" id="GO:0005524">
    <property type="term" value="F:ATP binding"/>
    <property type="evidence" value="ECO:0007669"/>
    <property type="project" value="UniProtKB-KW"/>
</dbReference>
<dbReference type="GO" id="GO:0004592">
    <property type="term" value="F:pantoate-beta-alanine ligase activity"/>
    <property type="evidence" value="ECO:0007669"/>
    <property type="project" value="UniProtKB-UniRule"/>
</dbReference>
<dbReference type="GO" id="GO:0015940">
    <property type="term" value="P:pantothenate biosynthetic process"/>
    <property type="evidence" value="ECO:0007669"/>
    <property type="project" value="UniProtKB-UniRule"/>
</dbReference>
<dbReference type="CDD" id="cd00560">
    <property type="entry name" value="PanC"/>
    <property type="match status" value="1"/>
</dbReference>
<dbReference type="FunFam" id="3.30.1300.10:FF:000001">
    <property type="entry name" value="Pantothenate synthetase"/>
    <property type="match status" value="1"/>
</dbReference>
<dbReference type="FunFam" id="3.40.50.620:FF:000013">
    <property type="entry name" value="Pantothenate synthetase"/>
    <property type="match status" value="1"/>
</dbReference>
<dbReference type="Gene3D" id="3.40.50.620">
    <property type="entry name" value="HUPs"/>
    <property type="match status" value="1"/>
</dbReference>
<dbReference type="Gene3D" id="3.30.1300.10">
    <property type="entry name" value="Pantoate-beta-alanine ligase, C-terminal domain"/>
    <property type="match status" value="1"/>
</dbReference>
<dbReference type="HAMAP" id="MF_00158">
    <property type="entry name" value="PanC"/>
    <property type="match status" value="1"/>
</dbReference>
<dbReference type="InterPro" id="IPR004821">
    <property type="entry name" value="Cyt_trans-like"/>
</dbReference>
<dbReference type="InterPro" id="IPR003721">
    <property type="entry name" value="Pantoate_ligase"/>
</dbReference>
<dbReference type="InterPro" id="IPR042176">
    <property type="entry name" value="Pantoate_ligase_C"/>
</dbReference>
<dbReference type="InterPro" id="IPR014729">
    <property type="entry name" value="Rossmann-like_a/b/a_fold"/>
</dbReference>
<dbReference type="NCBIfam" id="TIGR00125">
    <property type="entry name" value="cyt_tran_rel"/>
    <property type="match status" value="1"/>
</dbReference>
<dbReference type="NCBIfam" id="TIGR00018">
    <property type="entry name" value="panC"/>
    <property type="match status" value="1"/>
</dbReference>
<dbReference type="PANTHER" id="PTHR21299">
    <property type="entry name" value="CYTIDYLATE KINASE/PANTOATE-BETA-ALANINE LIGASE"/>
    <property type="match status" value="1"/>
</dbReference>
<dbReference type="PANTHER" id="PTHR21299:SF1">
    <property type="entry name" value="PANTOATE--BETA-ALANINE LIGASE"/>
    <property type="match status" value="1"/>
</dbReference>
<dbReference type="Pfam" id="PF02569">
    <property type="entry name" value="Pantoate_ligase"/>
    <property type="match status" value="1"/>
</dbReference>
<dbReference type="SUPFAM" id="SSF52374">
    <property type="entry name" value="Nucleotidylyl transferase"/>
    <property type="match status" value="1"/>
</dbReference>
<organism>
    <name type="scientific">Pelotomaculum thermopropionicum (strain DSM 13744 / JCM 10971 / SI)</name>
    <dbReference type="NCBI Taxonomy" id="370438"/>
    <lineage>
        <taxon>Bacteria</taxon>
        <taxon>Bacillati</taxon>
        <taxon>Bacillota</taxon>
        <taxon>Clostridia</taxon>
        <taxon>Eubacteriales</taxon>
        <taxon>Desulfotomaculaceae</taxon>
        <taxon>Pelotomaculum</taxon>
    </lineage>
</organism>
<feature type="chain" id="PRO_1000076860" description="Pantothenate synthetase">
    <location>
        <begin position="1"/>
        <end position="282"/>
    </location>
</feature>
<feature type="active site" description="Proton donor" evidence="1">
    <location>
        <position position="37"/>
    </location>
</feature>
<feature type="binding site" evidence="1">
    <location>
        <begin position="30"/>
        <end position="37"/>
    </location>
    <ligand>
        <name>ATP</name>
        <dbReference type="ChEBI" id="CHEBI:30616"/>
    </ligand>
</feature>
<feature type="binding site" evidence="1">
    <location>
        <position position="61"/>
    </location>
    <ligand>
        <name>(R)-pantoate</name>
        <dbReference type="ChEBI" id="CHEBI:15980"/>
    </ligand>
</feature>
<feature type="binding site" evidence="1">
    <location>
        <position position="61"/>
    </location>
    <ligand>
        <name>beta-alanine</name>
        <dbReference type="ChEBI" id="CHEBI:57966"/>
    </ligand>
</feature>
<feature type="binding site" evidence="1">
    <location>
        <begin position="147"/>
        <end position="150"/>
    </location>
    <ligand>
        <name>ATP</name>
        <dbReference type="ChEBI" id="CHEBI:30616"/>
    </ligand>
</feature>
<feature type="binding site" evidence="1">
    <location>
        <position position="153"/>
    </location>
    <ligand>
        <name>(R)-pantoate</name>
        <dbReference type="ChEBI" id="CHEBI:15980"/>
    </ligand>
</feature>
<feature type="binding site" evidence="1">
    <location>
        <position position="176"/>
    </location>
    <ligand>
        <name>ATP</name>
        <dbReference type="ChEBI" id="CHEBI:30616"/>
    </ligand>
</feature>
<feature type="binding site" evidence="1">
    <location>
        <begin position="184"/>
        <end position="187"/>
    </location>
    <ligand>
        <name>ATP</name>
        <dbReference type="ChEBI" id="CHEBI:30616"/>
    </ligand>
</feature>
<comment type="function">
    <text evidence="1">Catalyzes the condensation of pantoate with beta-alanine in an ATP-dependent reaction via a pantoyl-adenylate intermediate.</text>
</comment>
<comment type="catalytic activity">
    <reaction evidence="1">
        <text>(R)-pantoate + beta-alanine + ATP = (R)-pantothenate + AMP + diphosphate + H(+)</text>
        <dbReference type="Rhea" id="RHEA:10912"/>
        <dbReference type="ChEBI" id="CHEBI:15378"/>
        <dbReference type="ChEBI" id="CHEBI:15980"/>
        <dbReference type="ChEBI" id="CHEBI:29032"/>
        <dbReference type="ChEBI" id="CHEBI:30616"/>
        <dbReference type="ChEBI" id="CHEBI:33019"/>
        <dbReference type="ChEBI" id="CHEBI:57966"/>
        <dbReference type="ChEBI" id="CHEBI:456215"/>
        <dbReference type="EC" id="6.3.2.1"/>
    </reaction>
</comment>
<comment type="pathway">
    <text evidence="1">Cofactor biosynthesis; (R)-pantothenate biosynthesis; (R)-pantothenate from (R)-pantoate and beta-alanine: step 1/1.</text>
</comment>
<comment type="subunit">
    <text evidence="1">Homodimer.</text>
</comment>
<comment type="subcellular location">
    <subcellularLocation>
        <location evidence="1">Cytoplasm</location>
    </subcellularLocation>
</comment>
<comment type="miscellaneous">
    <text evidence="1">The reaction proceeds by a bi uni uni bi ping pong mechanism.</text>
</comment>
<comment type="similarity">
    <text evidence="1">Belongs to the pantothenate synthetase family.</text>
</comment>
<sequence length="282" mass="31547">MLVCNTISEIRAFVREARSKGRSIGFVPTMGYLHEGHLELMRRAKERCDTVVISIFVNPTQFGPNEDYDRYPRDLERDARLAGQVGVDAIFNPSVEEMYPAGYCTYVDVERLTGKLCGLSRPGHFRGVCTVVTKLFNIVKPDYAFFGQKDAQQALVIKRMAADLNMDLEVITVPTVREADGLAMSSRNVYLDPEQRRAALVLSRSLEKAGEAFRAGERDASKLRQMVLDMIKAEPLANIDYVEIYSYPELEPLDQINGPALLALAVKIGQTRLIDNAILGQL</sequence>